<evidence type="ECO:0000250" key="1"/>
<evidence type="ECO:0000255" key="2"/>
<evidence type="ECO:0000305" key="3"/>
<protein>
    <recommendedName>
        <fullName evidence="3">Small ribosomal subunit protein eS6</fullName>
    </recommendedName>
    <alternativeName>
        <fullName>40S ribosomal protein S6</fullName>
    </alternativeName>
</protein>
<name>RS6_CANGA</name>
<accession>Q6FJH3</accession>
<feature type="chain" id="PRO_0000137334" description="Small ribosomal subunit protein eS6">
    <location>
        <begin position="1"/>
        <end position="236"/>
    </location>
</feature>
<feature type="modified residue" description="Phosphoserine" evidence="2">
    <location>
        <position position="232"/>
    </location>
</feature>
<feature type="modified residue" description="Phosphoserine" evidence="2">
    <location>
        <position position="233"/>
    </location>
</feature>
<sequence length="236" mass="26937">MKLNIAYPVNGTQKTVEVDDEHRVRVFYDKRIGQEIEGEAVGDEFKGYTFKITGGNDKQGFPMKQGVLLPTRVKLLLAKGHSCYRPRRSGERKRKSVRGAIVGPDLAVLSLVIVKKGEQELEGVTDATVPKRLGPKRANHIRKFFGLTKEDDVRDFVIRREVTKGEKTYTKAPKIQRLVTPQRLQRKRYQRNLKVRNAQAQREAAAEYAQLLAKRLAERKAEKAETRKRRASSLKA</sequence>
<dbReference type="EMBL" id="CR380954">
    <property type="protein sequence ID" value="CAG59974.1"/>
    <property type="molecule type" value="Genomic_DNA"/>
</dbReference>
<dbReference type="EMBL" id="CR380959">
    <property type="protein sequence ID" value="CAG62597.1"/>
    <property type="molecule type" value="Genomic_DNA"/>
</dbReference>
<dbReference type="RefSeq" id="XP_447041.1">
    <property type="nucleotide sequence ID" value="XM_447041.1"/>
</dbReference>
<dbReference type="RefSeq" id="XP_449621.1">
    <property type="nucleotide sequence ID" value="XM_449621.1"/>
</dbReference>
<dbReference type="SMR" id="Q6FJH3"/>
<dbReference type="FunCoup" id="Q6FJH3">
    <property type="interactions" value="1223"/>
</dbReference>
<dbReference type="STRING" id="284593.Q6FJH3"/>
<dbReference type="EnsemblFungi" id="CAGL0H05643g-T">
    <property type="protein sequence ID" value="CAGL0H05643g-T-p1"/>
    <property type="gene ID" value="CAGL0H05643g"/>
</dbReference>
<dbReference type="EnsemblFungi" id="CAGL0M06303g-T">
    <property type="protein sequence ID" value="CAGL0M06303g-T-p1"/>
    <property type="gene ID" value="CAGL0M06303g"/>
</dbReference>
<dbReference type="KEGG" id="cgr:2888475"/>
<dbReference type="KEGG" id="cgr:2891669"/>
<dbReference type="CGD" id="CAL0130120">
    <property type="gene designation" value="CAGL0H05643g"/>
</dbReference>
<dbReference type="CGD" id="CAL0136781">
    <property type="gene designation" value="CAGL0M06303g"/>
</dbReference>
<dbReference type="VEuPathDB" id="FungiDB:B1J91_H05643g"/>
<dbReference type="VEuPathDB" id="FungiDB:B1J91_M06303g"/>
<dbReference type="VEuPathDB" id="FungiDB:CAGL0H05643g"/>
<dbReference type="VEuPathDB" id="FungiDB:CAGL0M06303g"/>
<dbReference type="eggNOG" id="KOG1646">
    <property type="taxonomic scope" value="Eukaryota"/>
</dbReference>
<dbReference type="HOGENOM" id="CLU_046346_0_1_1"/>
<dbReference type="InParanoid" id="Q6FJH3"/>
<dbReference type="OMA" id="KPRYKAP"/>
<dbReference type="Proteomes" id="UP000002428">
    <property type="component" value="Chromosome H"/>
</dbReference>
<dbReference type="Proteomes" id="UP000002428">
    <property type="component" value="Chromosome M"/>
</dbReference>
<dbReference type="GO" id="GO:0062040">
    <property type="term" value="C:fungal biofilm matrix"/>
    <property type="evidence" value="ECO:0000314"/>
    <property type="project" value="CGD"/>
</dbReference>
<dbReference type="GO" id="GO:1990904">
    <property type="term" value="C:ribonucleoprotein complex"/>
    <property type="evidence" value="ECO:0007669"/>
    <property type="project" value="UniProtKB-KW"/>
</dbReference>
<dbReference type="GO" id="GO:0005840">
    <property type="term" value="C:ribosome"/>
    <property type="evidence" value="ECO:0007669"/>
    <property type="project" value="UniProtKB-KW"/>
</dbReference>
<dbReference type="GO" id="GO:0003735">
    <property type="term" value="F:structural constituent of ribosome"/>
    <property type="evidence" value="ECO:0007669"/>
    <property type="project" value="InterPro"/>
</dbReference>
<dbReference type="GO" id="GO:0006412">
    <property type="term" value="P:translation"/>
    <property type="evidence" value="ECO:0007669"/>
    <property type="project" value="InterPro"/>
</dbReference>
<dbReference type="FunFam" id="1.20.5.2650:FF:000001">
    <property type="entry name" value="40S ribosomal protein S6"/>
    <property type="match status" value="1"/>
</dbReference>
<dbReference type="Gene3D" id="1.20.5.2650">
    <property type="match status" value="1"/>
</dbReference>
<dbReference type="InterPro" id="IPR001377">
    <property type="entry name" value="Ribosomal_eS6"/>
</dbReference>
<dbReference type="InterPro" id="IPR014401">
    <property type="entry name" value="Ribosomal_eS6-like"/>
</dbReference>
<dbReference type="InterPro" id="IPR018282">
    <property type="entry name" value="Ribosomal_eS6_CS"/>
</dbReference>
<dbReference type="PANTHER" id="PTHR11502">
    <property type="entry name" value="40S RIBOSOMAL PROTEIN S6"/>
    <property type="match status" value="1"/>
</dbReference>
<dbReference type="Pfam" id="PF01092">
    <property type="entry name" value="Ribosomal_S6e"/>
    <property type="match status" value="1"/>
</dbReference>
<dbReference type="PIRSF" id="PIRSF002129">
    <property type="entry name" value="Ribosom_S6_euk"/>
    <property type="match status" value="1"/>
</dbReference>
<dbReference type="SMART" id="SM01405">
    <property type="entry name" value="Ribosomal_S6e"/>
    <property type="match status" value="1"/>
</dbReference>
<dbReference type="PROSITE" id="PS00578">
    <property type="entry name" value="RIBOSOMAL_S6E"/>
    <property type="match status" value="1"/>
</dbReference>
<comment type="PTM">
    <text evidence="1">Phosphorylated.</text>
</comment>
<comment type="similarity">
    <text evidence="3">Belongs to the eukaryotic ribosomal protein eS6 family.</text>
</comment>
<organism>
    <name type="scientific">Candida glabrata (strain ATCC 2001 / BCRC 20586 / JCM 3761 / NBRC 0622 / NRRL Y-65 / CBS 138)</name>
    <name type="common">Yeast</name>
    <name type="synonym">Nakaseomyces glabratus</name>
    <dbReference type="NCBI Taxonomy" id="284593"/>
    <lineage>
        <taxon>Eukaryota</taxon>
        <taxon>Fungi</taxon>
        <taxon>Dikarya</taxon>
        <taxon>Ascomycota</taxon>
        <taxon>Saccharomycotina</taxon>
        <taxon>Saccharomycetes</taxon>
        <taxon>Saccharomycetales</taxon>
        <taxon>Saccharomycetaceae</taxon>
        <taxon>Nakaseomyces</taxon>
    </lineage>
</organism>
<keyword id="KW-0597">Phosphoprotein</keyword>
<keyword id="KW-1185">Reference proteome</keyword>
<keyword id="KW-0687">Ribonucleoprotein</keyword>
<keyword id="KW-0689">Ribosomal protein</keyword>
<gene>
    <name type="primary">RPS6A</name>
    <name type="ordered locus">CAGL0H05643g</name>
</gene>
<gene>
    <name type="primary">RPS6B</name>
    <name type="ordered locus">CAGL0M06303g</name>
</gene>
<proteinExistence type="inferred from homology"/>
<reference key="1">
    <citation type="journal article" date="2004" name="Nature">
        <title>Genome evolution in yeasts.</title>
        <authorList>
            <person name="Dujon B."/>
            <person name="Sherman D."/>
            <person name="Fischer G."/>
            <person name="Durrens P."/>
            <person name="Casaregola S."/>
            <person name="Lafontaine I."/>
            <person name="de Montigny J."/>
            <person name="Marck C."/>
            <person name="Neuveglise C."/>
            <person name="Talla E."/>
            <person name="Goffard N."/>
            <person name="Frangeul L."/>
            <person name="Aigle M."/>
            <person name="Anthouard V."/>
            <person name="Babour A."/>
            <person name="Barbe V."/>
            <person name="Barnay S."/>
            <person name="Blanchin S."/>
            <person name="Beckerich J.-M."/>
            <person name="Beyne E."/>
            <person name="Bleykasten C."/>
            <person name="Boisrame A."/>
            <person name="Boyer J."/>
            <person name="Cattolico L."/>
            <person name="Confanioleri F."/>
            <person name="de Daruvar A."/>
            <person name="Despons L."/>
            <person name="Fabre E."/>
            <person name="Fairhead C."/>
            <person name="Ferry-Dumazet H."/>
            <person name="Groppi A."/>
            <person name="Hantraye F."/>
            <person name="Hennequin C."/>
            <person name="Jauniaux N."/>
            <person name="Joyet P."/>
            <person name="Kachouri R."/>
            <person name="Kerrest A."/>
            <person name="Koszul R."/>
            <person name="Lemaire M."/>
            <person name="Lesur I."/>
            <person name="Ma L."/>
            <person name="Muller H."/>
            <person name="Nicaud J.-M."/>
            <person name="Nikolski M."/>
            <person name="Oztas S."/>
            <person name="Ozier-Kalogeropoulos O."/>
            <person name="Pellenz S."/>
            <person name="Potier S."/>
            <person name="Richard G.-F."/>
            <person name="Straub M.-L."/>
            <person name="Suleau A."/>
            <person name="Swennen D."/>
            <person name="Tekaia F."/>
            <person name="Wesolowski-Louvel M."/>
            <person name="Westhof E."/>
            <person name="Wirth B."/>
            <person name="Zeniou-Meyer M."/>
            <person name="Zivanovic Y."/>
            <person name="Bolotin-Fukuhara M."/>
            <person name="Thierry A."/>
            <person name="Bouchier C."/>
            <person name="Caudron B."/>
            <person name="Scarpelli C."/>
            <person name="Gaillardin C."/>
            <person name="Weissenbach J."/>
            <person name="Wincker P."/>
            <person name="Souciet J.-L."/>
        </authorList>
    </citation>
    <scope>NUCLEOTIDE SEQUENCE [LARGE SCALE GENOMIC DNA]</scope>
    <source>
        <strain>ATCC 2001 / BCRC 20586 / JCM 3761 / NBRC 0622 / NRRL Y-65 / CBS 138</strain>
    </source>
</reference>